<accession>Q8D1X8</accession>
<reference key="1">
    <citation type="journal article" date="2002" name="Nat. Genet.">
        <title>Genome sequence of the endocellular obligate symbiont of tsetse flies, Wigglesworthia glossinidia.</title>
        <authorList>
            <person name="Akman L."/>
            <person name="Yamashita A."/>
            <person name="Watanabe H."/>
            <person name="Oshima K."/>
            <person name="Shiba T."/>
            <person name="Hattori M."/>
            <person name="Aksoy S."/>
        </authorList>
    </citation>
    <scope>NUCLEOTIDE SEQUENCE [LARGE SCALE GENOMIC DNA]</scope>
</reference>
<feature type="chain" id="PRO_0000192428" description="Shikimate kinase">
    <location>
        <begin position="1"/>
        <end position="173"/>
    </location>
</feature>
<feature type="binding site" evidence="1">
    <location>
        <begin position="14"/>
        <end position="19"/>
    </location>
    <ligand>
        <name>ATP</name>
        <dbReference type="ChEBI" id="CHEBI:30616"/>
    </ligand>
</feature>
<feature type="binding site" evidence="1">
    <location>
        <position position="18"/>
    </location>
    <ligand>
        <name>Mg(2+)</name>
        <dbReference type="ChEBI" id="CHEBI:18420"/>
    </ligand>
</feature>
<feature type="binding site" evidence="1">
    <location>
        <position position="36"/>
    </location>
    <ligand>
        <name>substrate</name>
    </ligand>
</feature>
<feature type="binding site" evidence="1">
    <location>
        <position position="60"/>
    </location>
    <ligand>
        <name>substrate</name>
    </ligand>
</feature>
<feature type="binding site" evidence="1">
    <location>
        <position position="82"/>
    </location>
    <ligand>
        <name>substrate</name>
    </ligand>
</feature>
<feature type="binding site" evidence="1">
    <location>
        <position position="120"/>
    </location>
    <ligand>
        <name>ATP</name>
        <dbReference type="ChEBI" id="CHEBI:30616"/>
    </ligand>
</feature>
<feature type="binding site" evidence="1">
    <location>
        <position position="140"/>
    </location>
    <ligand>
        <name>substrate</name>
    </ligand>
</feature>
<proteinExistence type="inferred from homology"/>
<keyword id="KW-0028">Amino-acid biosynthesis</keyword>
<keyword id="KW-0057">Aromatic amino acid biosynthesis</keyword>
<keyword id="KW-0067">ATP-binding</keyword>
<keyword id="KW-0963">Cytoplasm</keyword>
<keyword id="KW-0418">Kinase</keyword>
<keyword id="KW-0460">Magnesium</keyword>
<keyword id="KW-0479">Metal-binding</keyword>
<keyword id="KW-0547">Nucleotide-binding</keyword>
<keyword id="KW-1185">Reference proteome</keyword>
<keyword id="KW-0808">Transferase</keyword>
<sequence>MVEKRNIFLIGPMGAGKSTIGRQISQQLSMEFFDSDQEIEKRTGADISWVLDLEGENKFRIREEKIINEITEKQGIVLATGGGSIQSRKTRNRLSARGLVVYLETTIDKQLDRTKRDKKKPILQNKNSVKSFLEKLATERNPLYEDIADLIIKTDFKSAKIIAHQIINTLFKT</sequence>
<gene>
    <name type="primary">aroK</name>
    <name type="ordered locus">WIGBR5780</name>
</gene>
<name>AROK_WIGBR</name>
<organism>
    <name type="scientific">Wigglesworthia glossinidia brevipalpis</name>
    <dbReference type="NCBI Taxonomy" id="36870"/>
    <lineage>
        <taxon>Bacteria</taxon>
        <taxon>Pseudomonadati</taxon>
        <taxon>Pseudomonadota</taxon>
        <taxon>Gammaproteobacteria</taxon>
        <taxon>Enterobacterales</taxon>
        <taxon>Erwiniaceae</taxon>
        <taxon>Wigglesworthia</taxon>
    </lineage>
</organism>
<protein>
    <recommendedName>
        <fullName>Shikimate kinase</fullName>
        <shortName>SK</shortName>
        <ecNumber>2.7.1.71</ecNumber>
    </recommendedName>
</protein>
<comment type="function">
    <text evidence="1">Catalyzes the specific phosphorylation of the 3-hydroxyl group of shikimic acid using ATP as a cosubstrate.</text>
</comment>
<comment type="catalytic activity">
    <reaction>
        <text>shikimate + ATP = 3-phosphoshikimate + ADP + H(+)</text>
        <dbReference type="Rhea" id="RHEA:13121"/>
        <dbReference type="ChEBI" id="CHEBI:15378"/>
        <dbReference type="ChEBI" id="CHEBI:30616"/>
        <dbReference type="ChEBI" id="CHEBI:36208"/>
        <dbReference type="ChEBI" id="CHEBI:145989"/>
        <dbReference type="ChEBI" id="CHEBI:456216"/>
        <dbReference type="EC" id="2.7.1.71"/>
    </reaction>
</comment>
<comment type="cofactor">
    <cofactor evidence="1">
        <name>Mg(2+)</name>
        <dbReference type="ChEBI" id="CHEBI:18420"/>
    </cofactor>
    <text evidence="1">Binds 1 Mg(2+) ion per subunit.</text>
</comment>
<comment type="pathway">
    <text>Metabolic intermediate biosynthesis; chorismate biosynthesis; chorismate from D-erythrose 4-phosphate and phosphoenolpyruvate: step 5/7.</text>
</comment>
<comment type="subunit">
    <text evidence="1">Monomer.</text>
</comment>
<comment type="subcellular location">
    <subcellularLocation>
        <location evidence="1">Cytoplasm</location>
    </subcellularLocation>
</comment>
<comment type="similarity">
    <text evidence="2">Belongs to the shikimate kinase family.</text>
</comment>
<comment type="sequence caution" evidence="2">
    <conflict type="erroneous initiation">
        <sequence resource="EMBL-CDS" id="BAC24724"/>
    </conflict>
</comment>
<evidence type="ECO:0000250" key="1"/>
<evidence type="ECO:0000305" key="2"/>
<dbReference type="EC" id="2.7.1.71"/>
<dbReference type="EMBL" id="BA000021">
    <property type="protein sequence ID" value="BAC24724.1"/>
    <property type="status" value="ALT_INIT"/>
    <property type="molecule type" value="Genomic_DNA"/>
</dbReference>
<dbReference type="SMR" id="Q8D1X8"/>
<dbReference type="STRING" id="36870.gene:10369087"/>
<dbReference type="KEGG" id="wbr:aroK"/>
<dbReference type="eggNOG" id="COG0703">
    <property type="taxonomic scope" value="Bacteria"/>
</dbReference>
<dbReference type="HOGENOM" id="CLU_057607_2_2_6"/>
<dbReference type="OrthoDB" id="9800332at2"/>
<dbReference type="UniPathway" id="UPA00053">
    <property type="reaction ID" value="UER00088"/>
</dbReference>
<dbReference type="Proteomes" id="UP000000562">
    <property type="component" value="Chromosome"/>
</dbReference>
<dbReference type="GO" id="GO:0005829">
    <property type="term" value="C:cytosol"/>
    <property type="evidence" value="ECO:0007669"/>
    <property type="project" value="TreeGrafter"/>
</dbReference>
<dbReference type="GO" id="GO:0005524">
    <property type="term" value="F:ATP binding"/>
    <property type="evidence" value="ECO:0007669"/>
    <property type="project" value="UniProtKB-UniRule"/>
</dbReference>
<dbReference type="GO" id="GO:0000287">
    <property type="term" value="F:magnesium ion binding"/>
    <property type="evidence" value="ECO:0007669"/>
    <property type="project" value="UniProtKB-UniRule"/>
</dbReference>
<dbReference type="GO" id="GO:0004765">
    <property type="term" value="F:shikimate kinase activity"/>
    <property type="evidence" value="ECO:0007669"/>
    <property type="project" value="UniProtKB-UniRule"/>
</dbReference>
<dbReference type="GO" id="GO:0008652">
    <property type="term" value="P:amino acid biosynthetic process"/>
    <property type="evidence" value="ECO:0007669"/>
    <property type="project" value="UniProtKB-KW"/>
</dbReference>
<dbReference type="GO" id="GO:0009073">
    <property type="term" value="P:aromatic amino acid family biosynthetic process"/>
    <property type="evidence" value="ECO:0007669"/>
    <property type="project" value="UniProtKB-KW"/>
</dbReference>
<dbReference type="GO" id="GO:0009423">
    <property type="term" value="P:chorismate biosynthetic process"/>
    <property type="evidence" value="ECO:0007669"/>
    <property type="project" value="UniProtKB-UniRule"/>
</dbReference>
<dbReference type="CDD" id="cd00464">
    <property type="entry name" value="SK"/>
    <property type="match status" value="1"/>
</dbReference>
<dbReference type="FunFam" id="3.40.50.300:FF:000099">
    <property type="entry name" value="Shikimate kinase 1"/>
    <property type="match status" value="1"/>
</dbReference>
<dbReference type="Gene3D" id="3.40.50.300">
    <property type="entry name" value="P-loop containing nucleotide triphosphate hydrolases"/>
    <property type="match status" value="1"/>
</dbReference>
<dbReference type="HAMAP" id="MF_00109">
    <property type="entry name" value="Shikimate_kinase"/>
    <property type="match status" value="1"/>
</dbReference>
<dbReference type="InterPro" id="IPR027417">
    <property type="entry name" value="P-loop_NTPase"/>
</dbReference>
<dbReference type="InterPro" id="IPR031322">
    <property type="entry name" value="Shikimate/glucono_kinase"/>
</dbReference>
<dbReference type="InterPro" id="IPR000623">
    <property type="entry name" value="Shikimate_kinase/TSH1"/>
</dbReference>
<dbReference type="InterPro" id="IPR023000">
    <property type="entry name" value="Shikimate_kinase_CS"/>
</dbReference>
<dbReference type="NCBIfam" id="NF003456">
    <property type="entry name" value="PRK05057.1"/>
    <property type="match status" value="1"/>
</dbReference>
<dbReference type="PANTHER" id="PTHR21087">
    <property type="entry name" value="SHIKIMATE KINASE"/>
    <property type="match status" value="1"/>
</dbReference>
<dbReference type="PANTHER" id="PTHR21087:SF16">
    <property type="entry name" value="SHIKIMATE KINASE 1, CHLOROPLASTIC"/>
    <property type="match status" value="1"/>
</dbReference>
<dbReference type="Pfam" id="PF01202">
    <property type="entry name" value="SKI"/>
    <property type="match status" value="1"/>
</dbReference>
<dbReference type="PRINTS" id="PR01100">
    <property type="entry name" value="SHIKIMTKNASE"/>
</dbReference>
<dbReference type="SUPFAM" id="SSF52540">
    <property type="entry name" value="P-loop containing nucleoside triphosphate hydrolases"/>
    <property type="match status" value="1"/>
</dbReference>
<dbReference type="PROSITE" id="PS01128">
    <property type="entry name" value="SHIKIMATE_KINASE"/>
    <property type="match status" value="1"/>
</dbReference>